<reference key="1">
    <citation type="journal article" date="2004" name="Nature">
        <title>Genome evolution in yeasts.</title>
        <authorList>
            <person name="Dujon B."/>
            <person name="Sherman D."/>
            <person name="Fischer G."/>
            <person name="Durrens P."/>
            <person name="Casaregola S."/>
            <person name="Lafontaine I."/>
            <person name="de Montigny J."/>
            <person name="Marck C."/>
            <person name="Neuveglise C."/>
            <person name="Talla E."/>
            <person name="Goffard N."/>
            <person name="Frangeul L."/>
            <person name="Aigle M."/>
            <person name="Anthouard V."/>
            <person name="Babour A."/>
            <person name="Barbe V."/>
            <person name="Barnay S."/>
            <person name="Blanchin S."/>
            <person name="Beckerich J.-M."/>
            <person name="Beyne E."/>
            <person name="Bleykasten C."/>
            <person name="Boisrame A."/>
            <person name="Boyer J."/>
            <person name="Cattolico L."/>
            <person name="Confanioleri F."/>
            <person name="de Daruvar A."/>
            <person name="Despons L."/>
            <person name="Fabre E."/>
            <person name="Fairhead C."/>
            <person name="Ferry-Dumazet H."/>
            <person name="Groppi A."/>
            <person name="Hantraye F."/>
            <person name="Hennequin C."/>
            <person name="Jauniaux N."/>
            <person name="Joyet P."/>
            <person name="Kachouri R."/>
            <person name="Kerrest A."/>
            <person name="Koszul R."/>
            <person name="Lemaire M."/>
            <person name="Lesur I."/>
            <person name="Ma L."/>
            <person name="Muller H."/>
            <person name="Nicaud J.-M."/>
            <person name="Nikolski M."/>
            <person name="Oztas S."/>
            <person name="Ozier-Kalogeropoulos O."/>
            <person name="Pellenz S."/>
            <person name="Potier S."/>
            <person name="Richard G.-F."/>
            <person name="Straub M.-L."/>
            <person name="Suleau A."/>
            <person name="Swennen D."/>
            <person name="Tekaia F."/>
            <person name="Wesolowski-Louvel M."/>
            <person name="Westhof E."/>
            <person name="Wirth B."/>
            <person name="Zeniou-Meyer M."/>
            <person name="Zivanovic Y."/>
            <person name="Bolotin-Fukuhara M."/>
            <person name="Thierry A."/>
            <person name="Bouchier C."/>
            <person name="Caudron B."/>
            <person name="Scarpelli C."/>
            <person name="Gaillardin C."/>
            <person name="Weissenbach J."/>
            <person name="Wincker P."/>
            <person name="Souciet J.-L."/>
        </authorList>
    </citation>
    <scope>NUCLEOTIDE SEQUENCE [LARGE SCALE GENOMIC DNA]</scope>
    <source>
        <strain>ATCC 8585 / CBS 2359 / DSM 70799 / NBRC 1267 / NRRL Y-1140 / WM37</strain>
    </source>
</reference>
<protein>
    <recommendedName>
        <fullName>Pre-mRNA-splicing factor CWC21</fullName>
    </recommendedName>
</protein>
<gene>
    <name type="primary">CWC21</name>
    <name type="ordered locus">KLLA0B10054g</name>
</gene>
<evidence type="ECO:0000250" key="1"/>
<evidence type="ECO:0000255" key="2"/>
<evidence type="ECO:0000256" key="3">
    <source>
        <dbReference type="SAM" id="MobiDB-lite"/>
    </source>
</evidence>
<evidence type="ECO:0000305" key="4"/>
<keyword id="KW-0963">Cytoplasm</keyword>
<keyword id="KW-0507">mRNA processing</keyword>
<keyword id="KW-0508">mRNA splicing</keyword>
<keyword id="KW-0539">Nucleus</keyword>
<keyword id="KW-1185">Reference proteome</keyword>
<keyword id="KW-0747">Spliceosome</keyword>
<feature type="chain" id="PRO_0000123500" description="Pre-mRNA-splicing factor CWC21">
    <location>
        <begin position="1"/>
        <end position="113"/>
    </location>
</feature>
<feature type="domain" description="CWF21" evidence="2">
    <location>
        <begin position="60"/>
        <end position="105"/>
    </location>
</feature>
<feature type="region of interest" description="Disordered" evidence="3">
    <location>
        <begin position="1"/>
        <end position="61"/>
    </location>
</feature>
<feature type="compositionally biased region" description="Polar residues" evidence="3">
    <location>
        <begin position="11"/>
        <end position="26"/>
    </location>
</feature>
<feature type="compositionally biased region" description="Basic and acidic residues" evidence="3">
    <location>
        <begin position="29"/>
        <end position="42"/>
    </location>
</feature>
<feature type="compositionally biased region" description="Low complexity" evidence="3">
    <location>
        <begin position="43"/>
        <end position="52"/>
    </location>
</feature>
<organism>
    <name type="scientific">Kluyveromyces lactis (strain ATCC 8585 / CBS 2359 / DSM 70799 / NBRC 1267 / NRRL Y-1140 / WM37)</name>
    <name type="common">Yeast</name>
    <name type="synonym">Candida sphaerica</name>
    <dbReference type="NCBI Taxonomy" id="284590"/>
    <lineage>
        <taxon>Eukaryota</taxon>
        <taxon>Fungi</taxon>
        <taxon>Dikarya</taxon>
        <taxon>Ascomycota</taxon>
        <taxon>Saccharomycotina</taxon>
        <taxon>Saccharomycetes</taxon>
        <taxon>Saccharomycetales</taxon>
        <taxon>Saccharomycetaceae</taxon>
        <taxon>Kluyveromyces</taxon>
    </lineage>
</organism>
<proteinExistence type="inferred from homology"/>
<comment type="function">
    <text evidence="1">Involved in pre-mRNA splicing. May function at or prior to the first catalytic step of splicing at the catalytic center of the spliceosome. May do so by stabilizing the catalytic center or the position of the RNA substrate (By similarity).</text>
</comment>
<comment type="subunit">
    <text evidence="1">Associates with the NTC complex (or PRP19-associated complex). The NTC complex associates with the spliceosome after the release of the U1 and U4 snRNAs and forms the CWC spliceosome subcomplex reminiscent of a late-stage spliceosome.</text>
</comment>
<comment type="subcellular location">
    <subcellularLocation>
        <location evidence="1">Cytoplasm</location>
    </subcellularLocation>
    <subcellularLocation>
        <location evidence="1">Nucleus</location>
    </subcellularLocation>
</comment>
<comment type="similarity">
    <text evidence="4">Belongs to the CWC21 family.</text>
</comment>
<comment type="sequence caution" evidence="4">
    <conflict type="erroneous initiation">
        <sequence resource="EMBL-CDS" id="CAH02369"/>
    </conflict>
</comment>
<accession>Q6CVR3</accession>
<name>CWC21_KLULA</name>
<sequence>MSYNGIGLSSAKGSSTSGYVQQSLAFTNRKKDPRLTTHDKEQQQQQQQQQIQPAKDESVISHKAKRQIELLVSEYRDKLEDGPDDLSDDTIDSKCEDYRRSILEGNEQSRSQN</sequence>
<dbReference type="EMBL" id="CR382122">
    <property type="protein sequence ID" value="CAH02369.1"/>
    <property type="status" value="ALT_INIT"/>
    <property type="molecule type" value="Genomic_DNA"/>
</dbReference>
<dbReference type="RefSeq" id="XP_451976.1">
    <property type="nucleotide sequence ID" value="XM_451976.1"/>
</dbReference>
<dbReference type="SMR" id="Q6CVR3"/>
<dbReference type="FunCoup" id="Q6CVR3">
    <property type="interactions" value="75"/>
</dbReference>
<dbReference type="STRING" id="284590.Q6CVR3"/>
<dbReference type="PaxDb" id="284590-Q6CVR3"/>
<dbReference type="KEGG" id="kla:KLLA0_B10054g"/>
<dbReference type="eggNOG" id="KOG1869">
    <property type="taxonomic scope" value="Eukaryota"/>
</dbReference>
<dbReference type="HOGENOM" id="CLU_1731738_0_0_1"/>
<dbReference type="InParanoid" id="Q6CVR3"/>
<dbReference type="Proteomes" id="UP000000598">
    <property type="component" value="Chromosome B"/>
</dbReference>
<dbReference type="GO" id="GO:0005737">
    <property type="term" value="C:cytoplasm"/>
    <property type="evidence" value="ECO:0007669"/>
    <property type="project" value="UniProtKB-SubCell"/>
</dbReference>
<dbReference type="GO" id="GO:0005681">
    <property type="term" value="C:spliceosomal complex"/>
    <property type="evidence" value="ECO:0007669"/>
    <property type="project" value="UniProtKB-KW"/>
</dbReference>
<dbReference type="GO" id="GO:0006397">
    <property type="term" value="P:mRNA processing"/>
    <property type="evidence" value="ECO:0007669"/>
    <property type="project" value="UniProtKB-KW"/>
</dbReference>
<dbReference type="GO" id="GO:0008380">
    <property type="term" value="P:RNA splicing"/>
    <property type="evidence" value="ECO:0007669"/>
    <property type="project" value="UniProtKB-KW"/>
</dbReference>
<dbReference type="CDD" id="cd21372">
    <property type="entry name" value="cwf21_CWC21-like"/>
    <property type="match status" value="1"/>
</dbReference>
<dbReference type="Gene3D" id="6.10.140.420">
    <property type="match status" value="1"/>
</dbReference>
<dbReference type="InterPro" id="IPR051372">
    <property type="entry name" value="CWC21"/>
</dbReference>
<dbReference type="InterPro" id="IPR013170">
    <property type="entry name" value="mRNA_splic_Cwf21_dom"/>
</dbReference>
<dbReference type="PANTHER" id="PTHR36562">
    <property type="entry name" value="SERINE/ARGININE REPETITIVE MATRIX 2"/>
    <property type="match status" value="1"/>
</dbReference>
<dbReference type="PANTHER" id="PTHR36562:SF5">
    <property type="entry name" value="SERINE_ARGININE REPETITIVE MATRIX 2"/>
    <property type="match status" value="1"/>
</dbReference>
<dbReference type="Pfam" id="PF08312">
    <property type="entry name" value="cwf21"/>
    <property type="match status" value="1"/>
</dbReference>
<dbReference type="SMART" id="SM01115">
    <property type="entry name" value="cwf21"/>
    <property type="match status" value="1"/>
</dbReference>